<accession>Q1II13</accession>
<protein>
    <recommendedName>
        <fullName evidence="1">Lipoyl synthase</fullName>
        <ecNumber evidence="1">2.8.1.8</ecNumber>
    </recommendedName>
    <alternativeName>
        <fullName evidence="1">Lip-syn</fullName>
        <shortName evidence="1">LS</shortName>
    </alternativeName>
    <alternativeName>
        <fullName evidence="1">Lipoate synthase</fullName>
    </alternativeName>
    <alternativeName>
        <fullName evidence="1">Lipoic acid synthase</fullName>
    </alternativeName>
    <alternativeName>
        <fullName evidence="1">Sulfur insertion protein LipA</fullName>
    </alternativeName>
</protein>
<sequence length="304" mass="34312">MAPELIQIDLEPRKPAPKPSWLRAKAPMGENYHDLKKLARGMNLHTVCESAQCPNIGECWNHKTATFMLLGNLCTRRCGFCAVPKGRPEPIDFDEPRRVAEAVATLGLNFAVVTSVNRDDDNVGAAQVFAQTIEQIREQKPGCRVEVLIPDFQGNDESLRIVLAAKPEILNHNTETVPRLYRAVRSGARYERTLNLLRRAKEINPAQVTKTGVMVGLGETTEELLHVYRDLARQNVDILTIGQYLRPSKDHAPMTRYYTPEEFLFMKEEAMKMGFRHVESGPLVRSSYHAHEQANSTKQPLVTI</sequence>
<comment type="function">
    <text evidence="1">Catalyzes the radical-mediated insertion of two sulfur atoms into the C-6 and C-8 positions of the octanoyl moiety bound to the lipoyl domains of lipoate-dependent enzymes, thereby converting the octanoylated domains into lipoylated derivatives.</text>
</comment>
<comment type="catalytic activity">
    <reaction evidence="1">
        <text>[[Fe-S] cluster scaffold protein carrying a second [4Fe-4S](2+) cluster] + N(6)-octanoyl-L-lysyl-[protein] + 2 oxidized [2Fe-2S]-[ferredoxin] + 2 S-adenosyl-L-methionine + 4 H(+) = [[Fe-S] cluster scaffold protein] + N(6)-[(R)-dihydrolipoyl]-L-lysyl-[protein] + 4 Fe(3+) + 2 hydrogen sulfide + 2 5'-deoxyadenosine + 2 L-methionine + 2 reduced [2Fe-2S]-[ferredoxin]</text>
        <dbReference type="Rhea" id="RHEA:16585"/>
        <dbReference type="Rhea" id="RHEA-COMP:9928"/>
        <dbReference type="Rhea" id="RHEA-COMP:10000"/>
        <dbReference type="Rhea" id="RHEA-COMP:10001"/>
        <dbReference type="Rhea" id="RHEA-COMP:10475"/>
        <dbReference type="Rhea" id="RHEA-COMP:14568"/>
        <dbReference type="Rhea" id="RHEA-COMP:14569"/>
        <dbReference type="ChEBI" id="CHEBI:15378"/>
        <dbReference type="ChEBI" id="CHEBI:17319"/>
        <dbReference type="ChEBI" id="CHEBI:29034"/>
        <dbReference type="ChEBI" id="CHEBI:29919"/>
        <dbReference type="ChEBI" id="CHEBI:33722"/>
        <dbReference type="ChEBI" id="CHEBI:33737"/>
        <dbReference type="ChEBI" id="CHEBI:33738"/>
        <dbReference type="ChEBI" id="CHEBI:57844"/>
        <dbReference type="ChEBI" id="CHEBI:59789"/>
        <dbReference type="ChEBI" id="CHEBI:78809"/>
        <dbReference type="ChEBI" id="CHEBI:83100"/>
        <dbReference type="EC" id="2.8.1.8"/>
    </reaction>
</comment>
<comment type="cofactor">
    <cofactor evidence="1">
        <name>[4Fe-4S] cluster</name>
        <dbReference type="ChEBI" id="CHEBI:49883"/>
    </cofactor>
    <text evidence="1">Binds 2 [4Fe-4S] clusters per subunit. One cluster is coordinated with 3 cysteines and an exchangeable S-adenosyl-L-methionine.</text>
</comment>
<comment type="pathway">
    <text evidence="1">Protein modification; protein lipoylation via endogenous pathway; protein N(6)-(lipoyl)lysine from octanoyl-[acyl-carrier-protein]: step 2/2.</text>
</comment>
<comment type="subcellular location">
    <subcellularLocation>
        <location evidence="1">Cytoplasm</location>
    </subcellularLocation>
</comment>
<comment type="similarity">
    <text evidence="1">Belongs to the radical SAM superfamily. Lipoyl synthase family.</text>
</comment>
<proteinExistence type="inferred from homology"/>
<keyword id="KW-0004">4Fe-4S</keyword>
<keyword id="KW-0963">Cytoplasm</keyword>
<keyword id="KW-0408">Iron</keyword>
<keyword id="KW-0411">Iron-sulfur</keyword>
<keyword id="KW-0479">Metal-binding</keyword>
<keyword id="KW-1185">Reference proteome</keyword>
<keyword id="KW-0949">S-adenosyl-L-methionine</keyword>
<keyword id="KW-0808">Transferase</keyword>
<feature type="chain" id="PRO_0000325221" description="Lipoyl synthase">
    <location>
        <begin position="1"/>
        <end position="304"/>
    </location>
</feature>
<feature type="domain" description="Radical SAM core" evidence="2">
    <location>
        <begin position="60"/>
        <end position="276"/>
    </location>
</feature>
<feature type="region of interest" description="Disordered" evidence="3">
    <location>
        <begin position="1"/>
        <end position="21"/>
    </location>
</feature>
<feature type="binding site" evidence="1">
    <location>
        <position position="48"/>
    </location>
    <ligand>
        <name>[4Fe-4S] cluster</name>
        <dbReference type="ChEBI" id="CHEBI:49883"/>
        <label>1</label>
    </ligand>
</feature>
<feature type="binding site" evidence="1">
    <location>
        <position position="53"/>
    </location>
    <ligand>
        <name>[4Fe-4S] cluster</name>
        <dbReference type="ChEBI" id="CHEBI:49883"/>
        <label>1</label>
    </ligand>
</feature>
<feature type="binding site" evidence="1">
    <location>
        <position position="59"/>
    </location>
    <ligand>
        <name>[4Fe-4S] cluster</name>
        <dbReference type="ChEBI" id="CHEBI:49883"/>
        <label>1</label>
    </ligand>
</feature>
<feature type="binding site" evidence="1">
    <location>
        <position position="74"/>
    </location>
    <ligand>
        <name>[4Fe-4S] cluster</name>
        <dbReference type="ChEBI" id="CHEBI:49883"/>
        <label>2</label>
        <note>4Fe-4S-S-AdoMet</note>
    </ligand>
</feature>
<feature type="binding site" evidence="1">
    <location>
        <position position="78"/>
    </location>
    <ligand>
        <name>[4Fe-4S] cluster</name>
        <dbReference type="ChEBI" id="CHEBI:49883"/>
        <label>2</label>
        <note>4Fe-4S-S-AdoMet</note>
    </ligand>
</feature>
<feature type="binding site" evidence="1">
    <location>
        <position position="81"/>
    </location>
    <ligand>
        <name>[4Fe-4S] cluster</name>
        <dbReference type="ChEBI" id="CHEBI:49883"/>
        <label>2</label>
        <note>4Fe-4S-S-AdoMet</note>
    </ligand>
</feature>
<feature type="binding site" evidence="1">
    <location>
        <position position="287"/>
    </location>
    <ligand>
        <name>[4Fe-4S] cluster</name>
        <dbReference type="ChEBI" id="CHEBI:49883"/>
        <label>1</label>
    </ligand>
</feature>
<evidence type="ECO:0000255" key="1">
    <source>
        <dbReference type="HAMAP-Rule" id="MF_00206"/>
    </source>
</evidence>
<evidence type="ECO:0000255" key="2">
    <source>
        <dbReference type="PROSITE-ProRule" id="PRU01266"/>
    </source>
</evidence>
<evidence type="ECO:0000256" key="3">
    <source>
        <dbReference type="SAM" id="MobiDB-lite"/>
    </source>
</evidence>
<dbReference type="EC" id="2.8.1.8" evidence="1"/>
<dbReference type="EMBL" id="CP000360">
    <property type="protein sequence ID" value="ABF43487.1"/>
    <property type="molecule type" value="Genomic_DNA"/>
</dbReference>
<dbReference type="RefSeq" id="WP_011525284.1">
    <property type="nucleotide sequence ID" value="NC_008009.1"/>
</dbReference>
<dbReference type="SMR" id="Q1II13"/>
<dbReference type="STRING" id="204669.Acid345_4487"/>
<dbReference type="EnsemblBacteria" id="ABF43487">
    <property type="protein sequence ID" value="ABF43487"/>
    <property type="gene ID" value="Acid345_4487"/>
</dbReference>
<dbReference type="KEGG" id="aba:Acid345_4487"/>
<dbReference type="eggNOG" id="COG0320">
    <property type="taxonomic scope" value="Bacteria"/>
</dbReference>
<dbReference type="HOGENOM" id="CLU_033144_2_1_0"/>
<dbReference type="OrthoDB" id="9787898at2"/>
<dbReference type="UniPathway" id="UPA00538">
    <property type="reaction ID" value="UER00593"/>
</dbReference>
<dbReference type="Proteomes" id="UP000002432">
    <property type="component" value="Chromosome"/>
</dbReference>
<dbReference type="GO" id="GO:0005737">
    <property type="term" value="C:cytoplasm"/>
    <property type="evidence" value="ECO:0007669"/>
    <property type="project" value="UniProtKB-SubCell"/>
</dbReference>
<dbReference type="GO" id="GO:0051539">
    <property type="term" value="F:4 iron, 4 sulfur cluster binding"/>
    <property type="evidence" value="ECO:0007669"/>
    <property type="project" value="UniProtKB-UniRule"/>
</dbReference>
<dbReference type="GO" id="GO:0016992">
    <property type="term" value="F:lipoate synthase activity"/>
    <property type="evidence" value="ECO:0007669"/>
    <property type="project" value="UniProtKB-UniRule"/>
</dbReference>
<dbReference type="GO" id="GO:0046872">
    <property type="term" value="F:metal ion binding"/>
    <property type="evidence" value="ECO:0007669"/>
    <property type="project" value="UniProtKB-KW"/>
</dbReference>
<dbReference type="CDD" id="cd01335">
    <property type="entry name" value="Radical_SAM"/>
    <property type="match status" value="1"/>
</dbReference>
<dbReference type="FunFam" id="3.20.20.70:FF:000040">
    <property type="entry name" value="Lipoyl synthase"/>
    <property type="match status" value="1"/>
</dbReference>
<dbReference type="Gene3D" id="3.20.20.70">
    <property type="entry name" value="Aldolase class I"/>
    <property type="match status" value="1"/>
</dbReference>
<dbReference type="HAMAP" id="MF_00206">
    <property type="entry name" value="Lipoyl_synth"/>
    <property type="match status" value="1"/>
</dbReference>
<dbReference type="InterPro" id="IPR013785">
    <property type="entry name" value="Aldolase_TIM"/>
</dbReference>
<dbReference type="InterPro" id="IPR006638">
    <property type="entry name" value="Elp3/MiaA/NifB-like_rSAM"/>
</dbReference>
<dbReference type="InterPro" id="IPR031691">
    <property type="entry name" value="LIAS_N"/>
</dbReference>
<dbReference type="InterPro" id="IPR003698">
    <property type="entry name" value="Lipoyl_synth"/>
</dbReference>
<dbReference type="InterPro" id="IPR007197">
    <property type="entry name" value="rSAM"/>
</dbReference>
<dbReference type="NCBIfam" id="TIGR00510">
    <property type="entry name" value="lipA"/>
    <property type="match status" value="1"/>
</dbReference>
<dbReference type="NCBIfam" id="NF004019">
    <property type="entry name" value="PRK05481.1"/>
    <property type="match status" value="1"/>
</dbReference>
<dbReference type="NCBIfam" id="NF009544">
    <property type="entry name" value="PRK12928.1"/>
    <property type="match status" value="1"/>
</dbReference>
<dbReference type="PANTHER" id="PTHR10949">
    <property type="entry name" value="LIPOYL SYNTHASE"/>
    <property type="match status" value="1"/>
</dbReference>
<dbReference type="PANTHER" id="PTHR10949:SF0">
    <property type="entry name" value="LIPOYL SYNTHASE, MITOCHONDRIAL"/>
    <property type="match status" value="1"/>
</dbReference>
<dbReference type="Pfam" id="PF16881">
    <property type="entry name" value="LIAS_N"/>
    <property type="match status" value="1"/>
</dbReference>
<dbReference type="Pfam" id="PF04055">
    <property type="entry name" value="Radical_SAM"/>
    <property type="match status" value="1"/>
</dbReference>
<dbReference type="PIRSF" id="PIRSF005963">
    <property type="entry name" value="Lipoyl_synth"/>
    <property type="match status" value="1"/>
</dbReference>
<dbReference type="SFLD" id="SFLDF00271">
    <property type="entry name" value="lipoyl_synthase"/>
    <property type="match status" value="1"/>
</dbReference>
<dbReference type="SFLD" id="SFLDG01058">
    <property type="entry name" value="lipoyl_synthase_like"/>
    <property type="match status" value="1"/>
</dbReference>
<dbReference type="SMART" id="SM00729">
    <property type="entry name" value="Elp3"/>
    <property type="match status" value="1"/>
</dbReference>
<dbReference type="SUPFAM" id="SSF102114">
    <property type="entry name" value="Radical SAM enzymes"/>
    <property type="match status" value="1"/>
</dbReference>
<dbReference type="PROSITE" id="PS51918">
    <property type="entry name" value="RADICAL_SAM"/>
    <property type="match status" value="1"/>
</dbReference>
<name>LIPA_KORVE</name>
<reference key="1">
    <citation type="journal article" date="2009" name="Appl. Environ. Microbiol.">
        <title>Three genomes from the phylum Acidobacteria provide insight into the lifestyles of these microorganisms in soils.</title>
        <authorList>
            <person name="Ward N.L."/>
            <person name="Challacombe J.F."/>
            <person name="Janssen P.H."/>
            <person name="Henrissat B."/>
            <person name="Coutinho P.M."/>
            <person name="Wu M."/>
            <person name="Xie G."/>
            <person name="Haft D.H."/>
            <person name="Sait M."/>
            <person name="Badger J."/>
            <person name="Barabote R.D."/>
            <person name="Bradley B."/>
            <person name="Brettin T.S."/>
            <person name="Brinkac L.M."/>
            <person name="Bruce D."/>
            <person name="Creasy T."/>
            <person name="Daugherty S.C."/>
            <person name="Davidsen T.M."/>
            <person name="DeBoy R.T."/>
            <person name="Detter J.C."/>
            <person name="Dodson R.J."/>
            <person name="Durkin A.S."/>
            <person name="Ganapathy A."/>
            <person name="Gwinn-Giglio M."/>
            <person name="Han C.S."/>
            <person name="Khouri H."/>
            <person name="Kiss H."/>
            <person name="Kothari S.P."/>
            <person name="Madupu R."/>
            <person name="Nelson K.E."/>
            <person name="Nelson W.C."/>
            <person name="Paulsen I."/>
            <person name="Penn K."/>
            <person name="Ren Q."/>
            <person name="Rosovitz M.J."/>
            <person name="Selengut J.D."/>
            <person name="Shrivastava S."/>
            <person name="Sullivan S.A."/>
            <person name="Tapia R."/>
            <person name="Thompson L.S."/>
            <person name="Watkins K.L."/>
            <person name="Yang Q."/>
            <person name="Yu C."/>
            <person name="Zafar N."/>
            <person name="Zhou L."/>
            <person name="Kuske C.R."/>
        </authorList>
    </citation>
    <scope>NUCLEOTIDE SEQUENCE [LARGE SCALE GENOMIC DNA]</scope>
    <source>
        <strain>Ellin345</strain>
    </source>
</reference>
<organism>
    <name type="scientific">Koribacter versatilis (strain Ellin345)</name>
    <dbReference type="NCBI Taxonomy" id="204669"/>
    <lineage>
        <taxon>Bacteria</taxon>
        <taxon>Pseudomonadati</taxon>
        <taxon>Acidobacteriota</taxon>
        <taxon>Terriglobia</taxon>
        <taxon>Terriglobales</taxon>
        <taxon>Candidatus Korobacteraceae</taxon>
        <taxon>Candidatus Korobacter</taxon>
    </lineage>
</organism>
<gene>
    <name evidence="1" type="primary">lipA</name>
    <name type="ordered locus">Acid345_4487</name>
</gene>